<organism>
    <name type="scientific">Lactococcus lactis subsp. cremoris (strain MG1363)</name>
    <dbReference type="NCBI Taxonomy" id="416870"/>
    <lineage>
        <taxon>Bacteria</taxon>
        <taxon>Bacillati</taxon>
        <taxon>Bacillota</taxon>
        <taxon>Bacilli</taxon>
        <taxon>Lactobacillales</taxon>
        <taxon>Streptococcaceae</taxon>
        <taxon>Lactococcus</taxon>
        <taxon>Lactococcus cremoris subsp. cremoris</taxon>
    </lineage>
</organism>
<name>RL19_LACLM</name>
<reference key="1">
    <citation type="journal article" date="2007" name="J. Bacteriol.">
        <title>The complete genome sequence of the lactic acid bacterial paradigm Lactococcus lactis subsp. cremoris MG1363.</title>
        <authorList>
            <person name="Wegmann U."/>
            <person name="O'Connell-Motherway M."/>
            <person name="Zomer A."/>
            <person name="Buist G."/>
            <person name="Shearman C."/>
            <person name="Canchaya C."/>
            <person name="Ventura M."/>
            <person name="Goesmann A."/>
            <person name="Gasson M.J."/>
            <person name="Kuipers O.P."/>
            <person name="van Sinderen D."/>
            <person name="Kok J."/>
        </authorList>
    </citation>
    <scope>NUCLEOTIDE SEQUENCE [LARGE SCALE GENOMIC DNA]</scope>
    <source>
        <strain>MG1363</strain>
    </source>
</reference>
<keyword id="KW-0002">3D-structure</keyword>
<keyword id="KW-0687">Ribonucleoprotein</keyword>
<keyword id="KW-0689">Ribosomal protein</keyword>
<comment type="function">
    <text evidence="1">This protein is located at the 30S-50S ribosomal subunit interface and may play a role in the structure and function of the aminoacyl-tRNA binding site.</text>
</comment>
<comment type="similarity">
    <text evidence="1">Belongs to the bacterial ribosomal protein bL19 family.</text>
</comment>
<proteinExistence type="evidence at protein level"/>
<evidence type="ECO:0000255" key="1">
    <source>
        <dbReference type="HAMAP-Rule" id="MF_00402"/>
    </source>
</evidence>
<evidence type="ECO:0000305" key="2"/>
<protein>
    <recommendedName>
        <fullName evidence="1">Large ribosomal subunit protein bL19</fullName>
    </recommendedName>
    <alternativeName>
        <fullName evidence="2">50S ribosomal protein L19</fullName>
    </alternativeName>
</protein>
<sequence>MNLIESINAAQLRTDIPDFRPGDTVRVHAKVVEGTRERIQIFEGVVIARKNSGINETYTVRKISNGVGVERIFPVHTPRVEKIEVIRHGKVRRAKLYYLRALTGKKARIAERRR</sequence>
<accession>A2RLS5</accession>
<gene>
    <name evidence="1" type="primary">rplS</name>
    <name type="ordered locus">llmg_1671</name>
</gene>
<dbReference type="EMBL" id="AM406671">
    <property type="protein sequence ID" value="CAL98245.1"/>
    <property type="molecule type" value="Genomic_DNA"/>
</dbReference>
<dbReference type="RefSeq" id="WP_011675838.1">
    <property type="nucleotide sequence ID" value="NC_009004.1"/>
</dbReference>
<dbReference type="PDB" id="5MYJ">
    <property type="method" value="EM"/>
    <property type="resolution" value="5.60 A"/>
    <property type="chains" value="BS=1-114"/>
</dbReference>
<dbReference type="PDBsum" id="5MYJ"/>
<dbReference type="EMDB" id="EMD-3581"/>
<dbReference type="SMR" id="A2RLS5"/>
<dbReference type="STRING" id="416870.llmg_1671"/>
<dbReference type="GeneID" id="61109160"/>
<dbReference type="KEGG" id="llm:llmg_1671"/>
<dbReference type="eggNOG" id="COG0335">
    <property type="taxonomic scope" value="Bacteria"/>
</dbReference>
<dbReference type="HOGENOM" id="CLU_103507_2_1_9"/>
<dbReference type="OrthoDB" id="9803541at2"/>
<dbReference type="PhylomeDB" id="A2RLS5"/>
<dbReference type="Proteomes" id="UP000000364">
    <property type="component" value="Chromosome"/>
</dbReference>
<dbReference type="GO" id="GO:0022625">
    <property type="term" value="C:cytosolic large ribosomal subunit"/>
    <property type="evidence" value="ECO:0007669"/>
    <property type="project" value="TreeGrafter"/>
</dbReference>
<dbReference type="GO" id="GO:0003735">
    <property type="term" value="F:structural constituent of ribosome"/>
    <property type="evidence" value="ECO:0007669"/>
    <property type="project" value="InterPro"/>
</dbReference>
<dbReference type="GO" id="GO:0006412">
    <property type="term" value="P:translation"/>
    <property type="evidence" value="ECO:0007669"/>
    <property type="project" value="UniProtKB-UniRule"/>
</dbReference>
<dbReference type="FunFam" id="2.30.30.790:FF:000001">
    <property type="entry name" value="50S ribosomal protein L19"/>
    <property type="match status" value="1"/>
</dbReference>
<dbReference type="Gene3D" id="2.30.30.790">
    <property type="match status" value="1"/>
</dbReference>
<dbReference type="HAMAP" id="MF_00402">
    <property type="entry name" value="Ribosomal_bL19"/>
    <property type="match status" value="1"/>
</dbReference>
<dbReference type="InterPro" id="IPR001857">
    <property type="entry name" value="Ribosomal_bL19"/>
</dbReference>
<dbReference type="InterPro" id="IPR018257">
    <property type="entry name" value="Ribosomal_bL19_CS"/>
</dbReference>
<dbReference type="InterPro" id="IPR038657">
    <property type="entry name" value="Ribosomal_bL19_sf"/>
</dbReference>
<dbReference type="InterPro" id="IPR008991">
    <property type="entry name" value="Translation_prot_SH3-like_sf"/>
</dbReference>
<dbReference type="NCBIfam" id="TIGR01024">
    <property type="entry name" value="rplS_bact"/>
    <property type="match status" value="1"/>
</dbReference>
<dbReference type="PANTHER" id="PTHR15680:SF9">
    <property type="entry name" value="LARGE RIBOSOMAL SUBUNIT PROTEIN BL19M"/>
    <property type="match status" value="1"/>
</dbReference>
<dbReference type="PANTHER" id="PTHR15680">
    <property type="entry name" value="RIBOSOMAL PROTEIN L19"/>
    <property type="match status" value="1"/>
</dbReference>
<dbReference type="Pfam" id="PF01245">
    <property type="entry name" value="Ribosomal_L19"/>
    <property type="match status" value="1"/>
</dbReference>
<dbReference type="PIRSF" id="PIRSF002191">
    <property type="entry name" value="Ribosomal_L19"/>
    <property type="match status" value="1"/>
</dbReference>
<dbReference type="PRINTS" id="PR00061">
    <property type="entry name" value="RIBOSOMALL19"/>
</dbReference>
<dbReference type="SUPFAM" id="SSF50104">
    <property type="entry name" value="Translation proteins SH3-like domain"/>
    <property type="match status" value="1"/>
</dbReference>
<dbReference type="PROSITE" id="PS01015">
    <property type="entry name" value="RIBOSOMAL_L19"/>
    <property type="match status" value="1"/>
</dbReference>
<feature type="chain" id="PRO_1000072247" description="Large ribosomal subunit protein bL19">
    <location>
        <begin position="1"/>
        <end position="114"/>
    </location>
</feature>